<evidence type="ECO:0000256" key="1">
    <source>
        <dbReference type="SAM" id="MobiDB-lite"/>
    </source>
</evidence>
<evidence type="ECO:0000269" key="2">
    <source>
    </source>
</evidence>
<evidence type="ECO:0000269" key="3">
    <source>
    </source>
</evidence>
<evidence type="ECO:0000303" key="4">
    <source>
    </source>
</evidence>
<evidence type="ECO:0000303" key="5">
    <source>
    </source>
</evidence>
<evidence type="ECO:0000305" key="6"/>
<evidence type="ECO:0000312" key="7">
    <source>
        <dbReference type="Araport" id="AT5G55850"/>
    </source>
</evidence>
<evidence type="ECO:0000312" key="8">
    <source>
        <dbReference type="EMBL" id="AED96689.2"/>
    </source>
</evidence>
<evidence type="ECO:0007744" key="9">
    <source>
    </source>
</evidence>
<sequence>MSDKGRPLPKFGEWDVNDPASAEGFTVIFNKARDEKKTGGKPGSPGKSSEGHVKSGGGDPSKPQPKKWLCCMQAPAVDS</sequence>
<name>NOI4_ARATH</name>
<organism>
    <name type="scientific">Arabidopsis thaliana</name>
    <name type="common">Mouse-ear cress</name>
    <dbReference type="NCBI Taxonomy" id="3702"/>
    <lineage>
        <taxon>Eukaryota</taxon>
        <taxon>Viridiplantae</taxon>
        <taxon>Streptophyta</taxon>
        <taxon>Embryophyta</taxon>
        <taxon>Tracheophyta</taxon>
        <taxon>Spermatophyta</taxon>
        <taxon>Magnoliopsida</taxon>
        <taxon>eudicotyledons</taxon>
        <taxon>Gunneridae</taxon>
        <taxon>Pentapetalae</taxon>
        <taxon>rosids</taxon>
        <taxon>malvids</taxon>
        <taxon>Brassicales</taxon>
        <taxon>Brassicaceae</taxon>
        <taxon>Camelineae</taxon>
        <taxon>Arabidopsis</taxon>
    </lineage>
</organism>
<protein>
    <recommendedName>
        <fullName evidence="5">Protein NOI4</fullName>
    </recommendedName>
    <alternativeName>
        <fullName evidence="4">Protein DiDi 18T-1d</fullName>
    </alternativeName>
</protein>
<reference key="1">
    <citation type="journal article" date="2000" name="DNA Res.">
        <title>Structural analysis of Arabidopsis thaliana chromosome 5. X. Sequence features of the regions of 3,076,755 bp covered by sixty P1 and TAC clones.</title>
        <authorList>
            <person name="Sato S."/>
            <person name="Nakamura Y."/>
            <person name="Kaneko T."/>
            <person name="Katoh T."/>
            <person name="Asamizu E."/>
            <person name="Kotani H."/>
            <person name="Tabata S."/>
        </authorList>
    </citation>
    <scope>NUCLEOTIDE SEQUENCE [LARGE SCALE GENOMIC DNA]</scope>
    <source>
        <strain>cv. Columbia</strain>
    </source>
</reference>
<reference key="2">
    <citation type="journal article" date="2017" name="Plant J.">
        <title>Araport11: a complete reannotation of the Arabidopsis thaliana reference genome.</title>
        <authorList>
            <person name="Cheng C.Y."/>
            <person name="Krishnakumar V."/>
            <person name="Chan A.P."/>
            <person name="Thibaud-Nissen F."/>
            <person name="Schobel S."/>
            <person name="Town C.D."/>
        </authorList>
    </citation>
    <scope>GENOME REANNOTATION</scope>
    <source>
        <strain>cv. Columbia</strain>
    </source>
</reference>
<reference key="3">
    <citation type="journal article" date="2003" name="Science">
        <title>Empirical analysis of transcriptional activity in the Arabidopsis genome.</title>
        <authorList>
            <person name="Yamada K."/>
            <person name="Lim J."/>
            <person name="Dale J.M."/>
            <person name="Chen H."/>
            <person name="Shinn P."/>
            <person name="Palm C.J."/>
            <person name="Southwick A.M."/>
            <person name="Wu H.C."/>
            <person name="Kim C.J."/>
            <person name="Nguyen M."/>
            <person name="Pham P.K."/>
            <person name="Cheuk R.F."/>
            <person name="Karlin-Newmann G."/>
            <person name="Liu S.X."/>
            <person name="Lam B."/>
            <person name="Sakano H."/>
            <person name="Wu T."/>
            <person name="Yu G."/>
            <person name="Miranda M."/>
            <person name="Quach H.L."/>
            <person name="Tripp M."/>
            <person name="Chang C.H."/>
            <person name="Lee J.M."/>
            <person name="Toriumi M.J."/>
            <person name="Chan M.M."/>
            <person name="Tang C.C."/>
            <person name="Onodera C.S."/>
            <person name="Deng J.M."/>
            <person name="Akiyama K."/>
            <person name="Ansari Y."/>
            <person name="Arakawa T."/>
            <person name="Banh J."/>
            <person name="Banno F."/>
            <person name="Bowser L."/>
            <person name="Brooks S.Y."/>
            <person name="Carninci P."/>
            <person name="Chao Q."/>
            <person name="Choy N."/>
            <person name="Enju A."/>
            <person name="Goldsmith A.D."/>
            <person name="Gurjal M."/>
            <person name="Hansen N.F."/>
            <person name="Hayashizaki Y."/>
            <person name="Johnson-Hopson C."/>
            <person name="Hsuan V.W."/>
            <person name="Iida K."/>
            <person name="Karnes M."/>
            <person name="Khan S."/>
            <person name="Koesema E."/>
            <person name="Ishida J."/>
            <person name="Jiang P.X."/>
            <person name="Jones T."/>
            <person name="Kawai J."/>
            <person name="Kamiya A."/>
            <person name="Meyers C."/>
            <person name="Nakajima M."/>
            <person name="Narusaka M."/>
            <person name="Seki M."/>
            <person name="Sakurai T."/>
            <person name="Satou M."/>
            <person name="Tamse R."/>
            <person name="Vaysberg M."/>
            <person name="Wallender E.K."/>
            <person name="Wong C."/>
            <person name="Yamamura Y."/>
            <person name="Yuan S."/>
            <person name="Shinozaki K."/>
            <person name="Davis R.W."/>
            <person name="Theologis A."/>
            <person name="Ecker J.R."/>
        </authorList>
    </citation>
    <scope>NUCLEOTIDE SEQUENCE [LARGE SCALE MRNA] (ISOFORM 1)</scope>
    <source>
        <strain>cv. Columbia</strain>
    </source>
</reference>
<reference key="4">
    <citation type="journal article" date="2001" name="Mol. Plant Microbe Interact.">
        <title>Arabidopsis thaliana genes expressed in the early compatible interaction with root-knot nematodes.</title>
        <authorList>
            <person name="Vercauteren I."/>
            <person name="van der Schueren E."/>
            <person name="Van Montagu M."/>
            <person name="Gheysen G."/>
        </authorList>
    </citation>
    <scope>PARTIAL NUCLEOTIDE SEQUENCE [MRNA] (ISOFORM 2)</scope>
    <scope>INDUCTION BY MELOIDOGYNE INCOGNITA</scope>
    <source>
        <strain>cv. Columbia</strain>
        <tissue>Root</tissue>
    </source>
</reference>
<reference key="5">
    <citation type="journal article" date="2005" name="Proc. Natl. Acad. Sci. U.S.A.">
        <title>Molecular characterization of proteolytic cleavage sites of the Pseudomonas syringae effector AvrRpt2.</title>
        <authorList>
            <person name="Chisholm S.T."/>
            <person name="Dahlbeck D."/>
            <person name="Krishnamurthy N."/>
            <person name="Day B."/>
            <person name="Sjolander K."/>
            <person name="Staskawicz B.J."/>
        </authorList>
    </citation>
    <scope>MUTAGENESIS OF 11-PHE-GLY-12</scope>
    <scope>PROTEOLYTIC CLEAVAGE BY P.SYRINGAE PV TOMATO AVRRPT2</scope>
</reference>
<reference key="6">
    <citation type="journal article" date="2005" name="Proc. Natl. Acad. Sci. U.S.A.">
        <title>The Pseudomonas syringae effector AvrRpt2 cleaves its C-terminally acylated target, RIN4, from Arabidopsis membranes to block RPM1 activation.</title>
        <authorList>
            <person name="Kim H.-S."/>
            <person name="Desveaux D."/>
            <person name="Singer A.U."/>
            <person name="Patel P."/>
            <person name="Sondek J."/>
            <person name="Dangl J.L."/>
        </authorList>
    </citation>
    <scope>NOMENCLATURE</scope>
</reference>
<reference key="7">
    <citation type="journal article" date="2009" name="Plant Physiol.">
        <title>Large-scale Arabidopsis phosphoproteome profiling reveals novel chloroplast kinase substrates and phosphorylation networks.</title>
        <authorList>
            <person name="Reiland S."/>
            <person name="Messerli G."/>
            <person name="Baerenfaller K."/>
            <person name="Gerrits B."/>
            <person name="Endler A."/>
            <person name="Grossmann J."/>
            <person name="Gruissem W."/>
            <person name="Baginsky S."/>
        </authorList>
    </citation>
    <scope>PHOSPHORYLATION [LARGE SCALE ANALYSIS] AT SER-44</scope>
    <scope>IDENTIFICATION BY MASS SPECTROMETRY [LARGE SCALE ANALYSIS]</scope>
</reference>
<feature type="chain" id="PRO_0000443958" description="Protein NOI4">
    <location>
        <begin position="1"/>
        <end position="79"/>
    </location>
</feature>
<feature type="region of interest" description="Disordered" evidence="1">
    <location>
        <begin position="31"/>
        <end position="68"/>
    </location>
</feature>
<feature type="site" description="Cleavage; by AvrRpt2" evidence="3">
    <location>
        <begin position="12"/>
        <end position="13"/>
    </location>
</feature>
<feature type="modified residue" description="Phosphoserine" evidence="9">
    <location>
        <position position="44"/>
    </location>
</feature>
<feature type="splice variant" id="VSP_059535" description="In isoform 2.">
    <original>KKWLCCMQAPAVDS</original>
    <variation>VKKMALLHASSSCGLLTDTKMDLLAAKKKVTVLTHLKAMVLFMFYCRLS</variation>
    <location>
        <begin position="66"/>
        <end position="79"/>
    </location>
</feature>
<feature type="mutagenesis site" description="Altered P.syringae pv tomato AvrRpt2-mediated cleavage leading to abnormal proteasome-dependent elimination." evidence="3">
    <original>FG</original>
    <variation>AA</variation>
    <location>
        <begin position="11"/>
        <end position="12"/>
    </location>
</feature>
<dbReference type="EMBL" id="AB018120">
    <property type="protein sequence ID" value="BAA97284.1"/>
    <property type="molecule type" value="Genomic_DNA"/>
</dbReference>
<dbReference type="EMBL" id="CP002688">
    <property type="protein sequence ID" value="AED96687.1"/>
    <property type="molecule type" value="Genomic_DNA"/>
</dbReference>
<dbReference type="EMBL" id="CP002688">
    <property type="protein sequence ID" value="AED96689.2"/>
    <property type="molecule type" value="Genomic_DNA"/>
</dbReference>
<dbReference type="EMBL" id="AF030386">
    <property type="protein sequence ID" value="AAB86938.1"/>
    <property type="molecule type" value="mRNA"/>
</dbReference>
<dbReference type="EMBL" id="AY065260">
    <property type="protein sequence ID" value="AAL38736.1"/>
    <property type="molecule type" value="mRNA"/>
</dbReference>
<dbReference type="EMBL" id="AY096671">
    <property type="protein sequence ID" value="AAM20305.1"/>
    <property type="molecule type" value="mRNA"/>
</dbReference>
<dbReference type="EMBL" id="AJ286356">
    <property type="protein sequence ID" value="CAB71020.1"/>
    <property type="molecule type" value="mRNA"/>
</dbReference>
<dbReference type="RefSeq" id="NP_001318805.1">
    <molecule id="O22633-1"/>
    <property type="nucleotide sequence ID" value="NM_001345164.1"/>
</dbReference>
<dbReference type="RefSeq" id="NP_200396.2">
    <molecule id="O22633-2"/>
    <property type="nucleotide sequence ID" value="NM_124967.3"/>
</dbReference>
<dbReference type="FunCoup" id="O22633">
    <property type="interactions" value="892"/>
</dbReference>
<dbReference type="STRING" id="3702.O22633"/>
<dbReference type="iPTMnet" id="O22633"/>
<dbReference type="PaxDb" id="3702-AT5G55850.2"/>
<dbReference type="ProteomicsDB" id="249125">
    <molecule id="O22633-1"/>
</dbReference>
<dbReference type="EnsemblPlants" id="AT5G55850.1">
    <molecule id="O22633-2"/>
    <property type="protein sequence ID" value="AT5G55850.1"/>
    <property type="gene ID" value="AT5G55850"/>
</dbReference>
<dbReference type="EnsemblPlants" id="AT5G55850.3">
    <molecule id="O22633-1"/>
    <property type="protein sequence ID" value="AT5G55850.3"/>
    <property type="gene ID" value="AT5G55850"/>
</dbReference>
<dbReference type="GeneID" id="835679"/>
<dbReference type="Gramene" id="AT5G55850.1">
    <molecule id="O22633-2"/>
    <property type="protein sequence ID" value="AT5G55850.1"/>
    <property type="gene ID" value="AT5G55850"/>
</dbReference>
<dbReference type="Gramene" id="AT5G55850.3">
    <molecule id="O22633-1"/>
    <property type="protein sequence ID" value="AT5G55850.3"/>
    <property type="gene ID" value="AT5G55850"/>
</dbReference>
<dbReference type="KEGG" id="ath:AT5G55850"/>
<dbReference type="Araport" id="AT5G55850"/>
<dbReference type="TAIR" id="AT5G55850">
    <property type="gene designation" value="NOI"/>
</dbReference>
<dbReference type="HOGENOM" id="CLU_169219_1_0_1"/>
<dbReference type="InParanoid" id="O22633"/>
<dbReference type="OMA" id="HAISGCG"/>
<dbReference type="OrthoDB" id="1086269at2759"/>
<dbReference type="PhylomeDB" id="O22633"/>
<dbReference type="PRO" id="PR:O22633"/>
<dbReference type="Proteomes" id="UP000006548">
    <property type="component" value="Chromosome 5"/>
</dbReference>
<dbReference type="ExpressionAtlas" id="O22633">
    <property type="expression patterns" value="baseline and differential"/>
</dbReference>
<dbReference type="GO" id="GO:0009624">
    <property type="term" value="P:response to nematode"/>
    <property type="evidence" value="ECO:0000270"/>
    <property type="project" value="UniProtKB"/>
</dbReference>
<dbReference type="InterPro" id="IPR040387">
    <property type="entry name" value="RIN4/NOI4"/>
</dbReference>
<dbReference type="InterPro" id="IPR008700">
    <property type="entry name" value="TypeIII_avirulence_cleave"/>
</dbReference>
<dbReference type="PANTHER" id="PTHR33159:SF93">
    <property type="entry name" value="PROTEIN NOI4"/>
    <property type="match status" value="1"/>
</dbReference>
<dbReference type="PANTHER" id="PTHR33159">
    <property type="entry name" value="RPM1-INTERACTING PROTEIN 4 (RIN4) FAMILY PROTEIN"/>
    <property type="match status" value="1"/>
</dbReference>
<dbReference type="Pfam" id="PF05627">
    <property type="entry name" value="AvrRpt-cleavage"/>
    <property type="match status" value="1"/>
</dbReference>
<comment type="alternative products">
    <event type="alternative splicing"/>
    <isoform>
        <id>O22633-1</id>
        <name>1</name>
        <sequence type="displayed"/>
    </isoform>
    <isoform>
        <id>O22633-2</id>
        <name>2</name>
        <sequence type="described" ref="VSP_059535"/>
    </isoform>
</comment>
<comment type="induction">
    <text evidence="2">During compatible interaction with the endoparasitic nematode M.incognita.</text>
</comment>
<comment type="PTM">
    <text evidence="3">Proteolytic cleaved by P.syringae pv tomato AvrRpt2 after Gly-12; this cleavage is critical for subsequent proteasome-dependent elimination.</text>
</comment>
<comment type="similarity">
    <text evidence="6">Belongs to the RIN4 family.</text>
</comment>
<accession>O22633</accession>
<accession>F4K693</accession>
<accession>F4K694</accession>
<accession>Q9M3R9</accession>
<proteinExistence type="evidence at protein level"/>
<keyword id="KW-0025">Alternative splicing</keyword>
<keyword id="KW-0597">Phosphoprotein</keyword>
<keyword id="KW-1185">Reference proteome</keyword>
<gene>
    <name evidence="5" type="primary">NOI4</name>
    <name evidence="7" type="ordered locus">At5g55850</name>
    <name evidence="8" type="ORF">MWJ3.3</name>
</gene>